<name>CYT_BITAR</name>
<keyword id="KW-0903">Direct protein sequencing</keyword>
<keyword id="KW-1015">Disulfide bond</keyword>
<keyword id="KW-0646">Protease inhibitor</keyword>
<keyword id="KW-0964">Secreted</keyword>
<keyword id="KW-0789">Thiol protease inhibitor</keyword>
<proteinExistence type="evidence at protein level"/>
<reference key="1">
    <citation type="journal article" date="1987" name="Biochem. J.">
        <title>Amino acid sequence of a cystatin from venom of the African puff adder (Bitis arietans).</title>
        <authorList>
            <person name="Ritonja A."/>
            <person name="Evans H.J."/>
            <person name="Machleidt W."/>
            <person name="Barrett A.J."/>
        </authorList>
    </citation>
    <scope>PROTEIN SEQUENCE</scope>
    <scope>VARIANT THR-57</scope>
    <source>
        <tissue>Venom</tissue>
    </source>
</reference>
<protein>
    <recommendedName>
        <fullName>Cystatin</fullName>
    </recommendedName>
</protein>
<dbReference type="PIR" id="A28793">
    <property type="entry name" value="A28793"/>
</dbReference>
<dbReference type="SMR" id="P08935"/>
<dbReference type="MEROPS" id="I25.012"/>
<dbReference type="GO" id="GO:0070062">
    <property type="term" value="C:extracellular exosome"/>
    <property type="evidence" value="ECO:0007669"/>
    <property type="project" value="TreeGrafter"/>
</dbReference>
<dbReference type="GO" id="GO:0004869">
    <property type="term" value="F:cysteine-type endopeptidase inhibitor activity"/>
    <property type="evidence" value="ECO:0007669"/>
    <property type="project" value="UniProtKB-KW"/>
</dbReference>
<dbReference type="CDD" id="cd00042">
    <property type="entry name" value="CY"/>
    <property type="match status" value="1"/>
</dbReference>
<dbReference type="FunFam" id="3.10.450.10:FF:000004">
    <property type="entry name" value="Cystatin C"/>
    <property type="match status" value="1"/>
</dbReference>
<dbReference type="Gene3D" id="3.10.450.10">
    <property type="match status" value="1"/>
</dbReference>
<dbReference type="InterPro" id="IPR000010">
    <property type="entry name" value="Cystatin_dom"/>
</dbReference>
<dbReference type="InterPro" id="IPR046350">
    <property type="entry name" value="Cystatin_sf"/>
</dbReference>
<dbReference type="InterPro" id="IPR018073">
    <property type="entry name" value="Prot_inh_cystat_CS"/>
</dbReference>
<dbReference type="PANTHER" id="PTHR47033">
    <property type="entry name" value="CYSTATIN-M"/>
    <property type="match status" value="1"/>
</dbReference>
<dbReference type="PANTHER" id="PTHR47033:SF1">
    <property type="entry name" value="CYSTATIN-M"/>
    <property type="match status" value="1"/>
</dbReference>
<dbReference type="Pfam" id="PF00031">
    <property type="entry name" value="Cystatin"/>
    <property type="match status" value="1"/>
</dbReference>
<dbReference type="SMART" id="SM00043">
    <property type="entry name" value="CY"/>
    <property type="match status" value="1"/>
</dbReference>
<dbReference type="SUPFAM" id="SSF54403">
    <property type="entry name" value="Cystatin/monellin"/>
    <property type="match status" value="1"/>
</dbReference>
<dbReference type="PROSITE" id="PS00287">
    <property type="entry name" value="CYSTATIN"/>
    <property type="match status" value="1"/>
</dbReference>
<accession>P08935</accession>
<organism>
    <name type="scientific">Bitis arietans</name>
    <name type="common">African puff adder</name>
    <dbReference type="NCBI Taxonomy" id="8692"/>
    <lineage>
        <taxon>Eukaryota</taxon>
        <taxon>Metazoa</taxon>
        <taxon>Chordata</taxon>
        <taxon>Craniata</taxon>
        <taxon>Vertebrata</taxon>
        <taxon>Euteleostomi</taxon>
        <taxon>Lepidosauria</taxon>
        <taxon>Squamata</taxon>
        <taxon>Bifurcata</taxon>
        <taxon>Unidentata</taxon>
        <taxon>Episquamata</taxon>
        <taxon>Toxicofera</taxon>
        <taxon>Serpentes</taxon>
        <taxon>Colubroidea</taxon>
        <taxon>Viperidae</taxon>
        <taxon>Viperinae</taxon>
        <taxon>Bitis</taxon>
    </lineage>
</organism>
<evidence type="ECO:0000250" key="1"/>
<evidence type="ECO:0000269" key="2">
    <source>
    </source>
</evidence>
<evidence type="ECO:0000305" key="3"/>
<feature type="chain" id="PRO_0000207152" description="Cystatin">
    <location>
        <begin position="1"/>
        <end position="111"/>
    </location>
</feature>
<feature type="domain" description="Cystatin">
    <location>
        <begin position="3"/>
        <end position="103"/>
    </location>
</feature>
<feature type="short sequence motif" description="Secondary area of contact">
    <location>
        <begin position="47"/>
        <end position="51"/>
    </location>
</feature>
<feature type="site" description="Reactive site">
    <location>
        <position position="3"/>
    </location>
</feature>
<feature type="disulfide bond" evidence="3">
    <location>
        <begin position="65"/>
        <end position="81"/>
    </location>
</feature>
<feature type="sequence variant" evidence="2">
    <original>M</original>
    <variation>T</variation>
    <location>
        <position position="57"/>
    </location>
</feature>
<sequence>IPGGLSPRDVTDPDVQEAAAFAVEKYNAGSKNDYYFKERRVVEAQSQVVSGVKYYLMMELLKTTCKKTVGRPKGYQEIQNCNLPPENQQEEITCRFEVWSRPWLPSTSLTK</sequence>
<comment type="function">
    <text evidence="1">Inhibits various C1 cysteine proteases including cathepsin L, papain and cathepsin B. This protein has no toxic activity and its function in the venom is unknown. It may play a role as housekeeping or regulatory protein (By similarity).</text>
</comment>
<comment type="subcellular location">
    <subcellularLocation>
        <location>Secreted</location>
    </subcellularLocation>
</comment>
<comment type="tissue specificity">
    <text>Expressed by the venom gland.</text>
</comment>
<comment type="similarity">
    <text evidence="3">Belongs to the cystatin family.</text>
</comment>